<accession>Q8ZKF8</accession>
<reference key="1">
    <citation type="journal article" date="2001" name="Nature">
        <title>Complete genome sequence of Salmonella enterica serovar Typhimurium LT2.</title>
        <authorList>
            <person name="McClelland M."/>
            <person name="Sanderson K.E."/>
            <person name="Spieth J."/>
            <person name="Clifton S.W."/>
            <person name="Latreille P."/>
            <person name="Courtney L."/>
            <person name="Porwollik S."/>
            <person name="Ali J."/>
            <person name="Dante M."/>
            <person name="Du F."/>
            <person name="Hou S."/>
            <person name="Layman D."/>
            <person name="Leonard S."/>
            <person name="Nguyen C."/>
            <person name="Scott K."/>
            <person name="Holmes A."/>
            <person name="Grewal N."/>
            <person name="Mulvaney E."/>
            <person name="Ryan E."/>
            <person name="Sun H."/>
            <person name="Florea L."/>
            <person name="Miller W."/>
            <person name="Stoneking T."/>
            <person name="Nhan M."/>
            <person name="Waterston R."/>
            <person name="Wilson R.K."/>
        </authorList>
    </citation>
    <scope>NUCLEOTIDE SEQUENCE [LARGE SCALE GENOMIC DNA]</scope>
    <source>
        <strain>LT2 / SGSC1412 / ATCC 700720</strain>
    </source>
</reference>
<name>ACTP_SALTY</name>
<evidence type="ECO:0000250" key="1"/>
<evidence type="ECO:0000255" key="2"/>
<evidence type="ECO:0000305" key="3"/>
<dbReference type="EMBL" id="AE006468">
    <property type="protein sequence ID" value="AAL23097.1"/>
    <property type="molecule type" value="Genomic_DNA"/>
</dbReference>
<dbReference type="RefSeq" id="WP_000832536.1">
    <property type="nucleotide sequence ID" value="NC_003197.2"/>
</dbReference>
<dbReference type="SMR" id="Q8ZKF8"/>
<dbReference type="STRING" id="99287.STM4273"/>
<dbReference type="PaxDb" id="99287-STM4273"/>
<dbReference type="KEGG" id="stm:STM4273"/>
<dbReference type="PATRIC" id="fig|99287.12.peg.4494"/>
<dbReference type="HOGENOM" id="CLU_018808_8_3_6"/>
<dbReference type="OMA" id="GTTWVQM"/>
<dbReference type="PhylomeDB" id="Q8ZKF8"/>
<dbReference type="BioCyc" id="SENT99287:STM4273-MONOMER"/>
<dbReference type="Proteomes" id="UP000001014">
    <property type="component" value="Chromosome"/>
</dbReference>
<dbReference type="GO" id="GO:0005886">
    <property type="term" value="C:plasma membrane"/>
    <property type="evidence" value="ECO:0000318"/>
    <property type="project" value="GO_Central"/>
</dbReference>
<dbReference type="GO" id="GO:0015123">
    <property type="term" value="F:acetate transmembrane transporter activity"/>
    <property type="evidence" value="ECO:0000318"/>
    <property type="project" value="GO_Central"/>
</dbReference>
<dbReference type="GO" id="GO:0043879">
    <property type="term" value="F:glycolate transmembrane transporter activity"/>
    <property type="evidence" value="ECO:0007669"/>
    <property type="project" value="InterPro"/>
</dbReference>
<dbReference type="GO" id="GO:0015293">
    <property type="term" value="F:symporter activity"/>
    <property type="evidence" value="ECO:0007669"/>
    <property type="project" value="UniProtKB-KW"/>
</dbReference>
<dbReference type="GO" id="GO:0006847">
    <property type="term" value="P:plasma membrane acetate transport"/>
    <property type="evidence" value="ECO:0000318"/>
    <property type="project" value="GO_Central"/>
</dbReference>
<dbReference type="GO" id="GO:0006814">
    <property type="term" value="P:sodium ion transport"/>
    <property type="evidence" value="ECO:0007669"/>
    <property type="project" value="UniProtKB-KW"/>
</dbReference>
<dbReference type="CDD" id="cd11480">
    <property type="entry name" value="SLC5sbd_u4"/>
    <property type="match status" value="1"/>
</dbReference>
<dbReference type="FunFam" id="1.20.1730.10:FF:000001">
    <property type="entry name" value="Cation/acetate symporter ActP"/>
    <property type="match status" value="1"/>
</dbReference>
<dbReference type="Gene3D" id="1.20.1730.10">
    <property type="entry name" value="Sodium/glucose cotransporter"/>
    <property type="match status" value="1"/>
</dbReference>
<dbReference type="HAMAP" id="MF_01426">
    <property type="entry name" value="Acet_symport_ActP"/>
    <property type="match status" value="1"/>
</dbReference>
<dbReference type="InterPro" id="IPR014083">
    <property type="entry name" value="Cation/Ac_symporter_ActP"/>
</dbReference>
<dbReference type="InterPro" id="IPR038377">
    <property type="entry name" value="Na/Glc_symporter_sf"/>
</dbReference>
<dbReference type="InterPro" id="IPR001734">
    <property type="entry name" value="Na/solute_symporter"/>
</dbReference>
<dbReference type="InterPro" id="IPR018212">
    <property type="entry name" value="Na/solute_symporter_CS"/>
</dbReference>
<dbReference type="InterPro" id="IPR050277">
    <property type="entry name" value="Sodium:Solute_Symporter"/>
</dbReference>
<dbReference type="NCBIfam" id="NF006903">
    <property type="entry name" value="PRK09395.1"/>
    <property type="match status" value="1"/>
</dbReference>
<dbReference type="NCBIfam" id="NF009135">
    <property type="entry name" value="PRK12488.1"/>
    <property type="match status" value="1"/>
</dbReference>
<dbReference type="NCBIfam" id="TIGR00813">
    <property type="entry name" value="sss"/>
    <property type="match status" value="1"/>
</dbReference>
<dbReference type="NCBIfam" id="TIGR02711">
    <property type="entry name" value="symport_actP"/>
    <property type="match status" value="1"/>
</dbReference>
<dbReference type="PANTHER" id="PTHR48086:SF6">
    <property type="entry name" value="CATION_ACETATE SYMPORTER ACTP"/>
    <property type="match status" value="1"/>
</dbReference>
<dbReference type="PANTHER" id="PTHR48086">
    <property type="entry name" value="SODIUM/PROLINE SYMPORTER-RELATED"/>
    <property type="match status" value="1"/>
</dbReference>
<dbReference type="Pfam" id="PF00474">
    <property type="entry name" value="SSF"/>
    <property type="match status" value="1"/>
</dbReference>
<dbReference type="PROSITE" id="PS00456">
    <property type="entry name" value="NA_SOLUT_SYMP_1"/>
    <property type="match status" value="1"/>
</dbReference>
<dbReference type="PROSITE" id="PS00457">
    <property type="entry name" value="NA_SOLUT_SYMP_2"/>
    <property type="match status" value="1"/>
</dbReference>
<dbReference type="PROSITE" id="PS50283">
    <property type="entry name" value="NA_SOLUT_SYMP_3"/>
    <property type="match status" value="1"/>
</dbReference>
<sequence>MKRVLTALAAALPFAAHAADAISGAVERQPTNWQAIIMFLIFVVFTLGITYWASKRVRSRSDYYTAGGNITGFQNGLAIAGDYMSAASFLGISALVFTSGYDGLIYSLGFLVGWPIILFLIAERLRNLGRYTFADVASYRLKQGPIRILSACGSLVVVALYLIAQMVGAGKLIELLFGLNYHIAVVLVGVLMMMYVLFGGMLATTWVQIIKAVLLLFGASFMAFMVMKHVGFSFNNLFTEAMAVHPKGTAIMSPGGLVQDPISALSLGLGLMFGTAGLPHILMRFFTVSDAREARKSVFYATGFMGYFYILTFIIGFGAIMLVGANPAYKDAAGALIGGNNMAAVHLANAVGGNLFLGFISAVAFATILAVVAGLTLAGASAVSHDLYANVFRKGATEREELKVSKITVLVLGVIAIILGVLFENQNIAFMVGLAFAIAASCNFPIILLSMYWSKLTTRGAMLGGWLGLLTAVVLMILGPTIWVQILGHEKAIFPYEYPALFSISVAFLGIWFFSATDNSAEGNREREQFRAQFIRSQTGFGVQQGRAH</sequence>
<organism>
    <name type="scientific">Salmonella typhimurium (strain LT2 / SGSC1412 / ATCC 700720)</name>
    <dbReference type="NCBI Taxonomy" id="99287"/>
    <lineage>
        <taxon>Bacteria</taxon>
        <taxon>Pseudomonadati</taxon>
        <taxon>Pseudomonadota</taxon>
        <taxon>Gammaproteobacteria</taxon>
        <taxon>Enterobacterales</taxon>
        <taxon>Enterobacteriaceae</taxon>
        <taxon>Salmonella</taxon>
    </lineage>
</organism>
<proteinExistence type="inferred from homology"/>
<comment type="function">
    <text evidence="1">Transports acetate.</text>
</comment>
<comment type="subcellular location">
    <subcellularLocation>
        <location evidence="1">Cell inner membrane</location>
        <topology evidence="1">Multi-pass membrane protein</topology>
    </subcellularLocation>
</comment>
<comment type="similarity">
    <text evidence="3">Belongs to the sodium:solute symporter (SSF) (TC 2.A.21) family.</text>
</comment>
<protein>
    <recommendedName>
        <fullName>Cation/acetate symporter ActP</fullName>
    </recommendedName>
    <alternativeName>
        <fullName>Acetate permease</fullName>
    </alternativeName>
    <alternativeName>
        <fullName>Acetate transporter ActP</fullName>
    </alternativeName>
</protein>
<gene>
    <name type="primary">actP</name>
    <name type="ordered locus">STM4273</name>
</gene>
<feature type="chain" id="PRO_0000105414" description="Cation/acetate symporter ActP">
    <location>
        <begin position="1"/>
        <end position="549"/>
    </location>
</feature>
<feature type="topological domain" description="Periplasmic" evidence="2">
    <location>
        <begin position="1"/>
        <end position="32"/>
    </location>
</feature>
<feature type="transmembrane region" description="Helical" evidence="2">
    <location>
        <begin position="33"/>
        <end position="55"/>
    </location>
</feature>
<feature type="topological domain" description="Cytoplasmic" evidence="2">
    <location>
        <begin position="56"/>
        <end position="75"/>
    </location>
</feature>
<feature type="transmembrane region" description="Helical" evidence="2">
    <location>
        <begin position="76"/>
        <end position="98"/>
    </location>
</feature>
<feature type="topological domain" description="Periplasmic" evidence="2">
    <location>
        <begin position="99"/>
        <end position="102"/>
    </location>
</feature>
<feature type="transmembrane region" description="Helical" evidence="2">
    <location>
        <begin position="103"/>
        <end position="125"/>
    </location>
</feature>
<feature type="topological domain" description="Cytoplasmic" evidence="2">
    <location>
        <begin position="126"/>
        <end position="145"/>
    </location>
</feature>
<feature type="transmembrane region" description="Helical" evidence="2">
    <location>
        <begin position="146"/>
        <end position="168"/>
    </location>
</feature>
<feature type="topological domain" description="Periplasmic" evidence="2">
    <location>
        <begin position="169"/>
        <end position="182"/>
    </location>
</feature>
<feature type="transmembrane region" description="Helical" evidence="2">
    <location>
        <begin position="183"/>
        <end position="205"/>
    </location>
</feature>
<feature type="topological domain" description="Cytoplasmic" evidence="2">
    <location>
        <begin position="206"/>
        <end position="211"/>
    </location>
</feature>
<feature type="transmembrane region" description="Helical" evidence="2">
    <location>
        <begin position="212"/>
        <end position="234"/>
    </location>
</feature>
<feature type="topological domain" description="Periplasmic" evidence="2">
    <location>
        <begin position="235"/>
        <end position="260"/>
    </location>
</feature>
<feature type="transmembrane region" description="Helical" evidence="2">
    <location>
        <begin position="261"/>
        <end position="283"/>
    </location>
</feature>
<feature type="topological domain" description="Cytoplasmic" evidence="2">
    <location>
        <begin position="284"/>
        <end position="302"/>
    </location>
</feature>
<feature type="transmembrane region" description="Helical" evidence="2">
    <location>
        <begin position="303"/>
        <end position="325"/>
    </location>
</feature>
<feature type="topological domain" description="Periplasmic" evidence="2">
    <location>
        <begin position="326"/>
        <end position="358"/>
    </location>
</feature>
<feature type="transmembrane region" description="Helical" evidence="2">
    <location>
        <begin position="359"/>
        <end position="381"/>
    </location>
</feature>
<feature type="topological domain" description="Cytoplasmic" evidence="2">
    <location>
        <begin position="382"/>
        <end position="401"/>
    </location>
</feature>
<feature type="transmembrane region" description="Helical" evidence="2">
    <location>
        <begin position="402"/>
        <end position="424"/>
    </location>
</feature>
<feature type="topological domain" description="Periplasmic" evidence="2">
    <location>
        <begin position="425"/>
        <end position="427"/>
    </location>
</feature>
<feature type="transmembrane region" description="Helical" evidence="2">
    <location>
        <begin position="428"/>
        <end position="450"/>
    </location>
</feature>
<feature type="topological domain" description="Cytoplasmic" evidence="2">
    <location>
        <begin position="451"/>
        <end position="461"/>
    </location>
</feature>
<feature type="transmembrane region" description="Helical" evidence="2">
    <location>
        <begin position="462"/>
        <end position="484"/>
    </location>
</feature>
<feature type="topological domain" description="Periplasmic" evidence="2">
    <location>
        <begin position="485"/>
        <end position="493"/>
    </location>
</feature>
<feature type="transmembrane region" description="Helical" evidence="2">
    <location>
        <begin position="494"/>
        <end position="516"/>
    </location>
</feature>
<feature type="topological domain" description="Cytoplasmic" evidence="2">
    <location>
        <begin position="517"/>
        <end position="549"/>
    </location>
</feature>
<keyword id="KW-0997">Cell inner membrane</keyword>
<keyword id="KW-1003">Cell membrane</keyword>
<keyword id="KW-0406">Ion transport</keyword>
<keyword id="KW-0472">Membrane</keyword>
<keyword id="KW-1185">Reference proteome</keyword>
<keyword id="KW-0915">Sodium</keyword>
<keyword id="KW-0739">Sodium transport</keyword>
<keyword id="KW-0769">Symport</keyword>
<keyword id="KW-0812">Transmembrane</keyword>
<keyword id="KW-1133">Transmembrane helix</keyword>
<keyword id="KW-0813">Transport</keyword>